<accession>P87125</accession>
<proteinExistence type="inferred from homology"/>
<reference key="1">
    <citation type="journal article" date="2002" name="Nature">
        <title>The genome sequence of Schizosaccharomyces pombe.</title>
        <authorList>
            <person name="Wood V."/>
            <person name="Gwilliam R."/>
            <person name="Rajandream M.A."/>
            <person name="Lyne M.H."/>
            <person name="Lyne R."/>
            <person name="Stewart A."/>
            <person name="Sgouros J.G."/>
            <person name="Peat N."/>
            <person name="Hayles J."/>
            <person name="Baker S.G."/>
            <person name="Basham D."/>
            <person name="Bowman S."/>
            <person name="Brooks K."/>
            <person name="Brown D."/>
            <person name="Brown S."/>
            <person name="Chillingworth T."/>
            <person name="Churcher C.M."/>
            <person name="Collins M."/>
            <person name="Connor R."/>
            <person name="Cronin A."/>
            <person name="Davis P."/>
            <person name="Feltwell T."/>
            <person name="Fraser A."/>
            <person name="Gentles S."/>
            <person name="Goble A."/>
            <person name="Hamlin N."/>
            <person name="Harris D.E."/>
            <person name="Hidalgo J."/>
            <person name="Hodgson G."/>
            <person name="Holroyd S."/>
            <person name="Hornsby T."/>
            <person name="Howarth S."/>
            <person name="Huckle E.J."/>
            <person name="Hunt S."/>
            <person name="Jagels K."/>
            <person name="James K.D."/>
            <person name="Jones L."/>
            <person name="Jones M."/>
            <person name="Leather S."/>
            <person name="McDonald S."/>
            <person name="McLean J."/>
            <person name="Mooney P."/>
            <person name="Moule S."/>
            <person name="Mungall K.L."/>
            <person name="Murphy L.D."/>
            <person name="Niblett D."/>
            <person name="Odell C."/>
            <person name="Oliver K."/>
            <person name="O'Neil S."/>
            <person name="Pearson D."/>
            <person name="Quail M.A."/>
            <person name="Rabbinowitsch E."/>
            <person name="Rutherford K.M."/>
            <person name="Rutter S."/>
            <person name="Saunders D."/>
            <person name="Seeger K."/>
            <person name="Sharp S."/>
            <person name="Skelton J."/>
            <person name="Simmonds M.N."/>
            <person name="Squares R."/>
            <person name="Squares S."/>
            <person name="Stevens K."/>
            <person name="Taylor K."/>
            <person name="Taylor R.G."/>
            <person name="Tivey A."/>
            <person name="Walsh S.V."/>
            <person name="Warren T."/>
            <person name="Whitehead S."/>
            <person name="Woodward J.R."/>
            <person name="Volckaert G."/>
            <person name="Aert R."/>
            <person name="Robben J."/>
            <person name="Grymonprez B."/>
            <person name="Weltjens I."/>
            <person name="Vanstreels E."/>
            <person name="Rieger M."/>
            <person name="Schaefer M."/>
            <person name="Mueller-Auer S."/>
            <person name="Gabel C."/>
            <person name="Fuchs M."/>
            <person name="Duesterhoeft A."/>
            <person name="Fritzc C."/>
            <person name="Holzer E."/>
            <person name="Moestl D."/>
            <person name="Hilbert H."/>
            <person name="Borzym K."/>
            <person name="Langer I."/>
            <person name="Beck A."/>
            <person name="Lehrach H."/>
            <person name="Reinhardt R."/>
            <person name="Pohl T.M."/>
            <person name="Eger P."/>
            <person name="Zimmermann W."/>
            <person name="Wedler H."/>
            <person name="Wambutt R."/>
            <person name="Purnelle B."/>
            <person name="Goffeau A."/>
            <person name="Cadieu E."/>
            <person name="Dreano S."/>
            <person name="Gloux S."/>
            <person name="Lelaure V."/>
            <person name="Mottier S."/>
            <person name="Galibert F."/>
            <person name="Aves S.J."/>
            <person name="Xiang Z."/>
            <person name="Hunt C."/>
            <person name="Moore K."/>
            <person name="Hurst S.M."/>
            <person name="Lucas M."/>
            <person name="Rochet M."/>
            <person name="Gaillardin C."/>
            <person name="Tallada V.A."/>
            <person name="Garzon A."/>
            <person name="Thode G."/>
            <person name="Daga R.R."/>
            <person name="Cruzado L."/>
            <person name="Jimenez J."/>
            <person name="Sanchez M."/>
            <person name="del Rey F."/>
            <person name="Benito J."/>
            <person name="Dominguez A."/>
            <person name="Revuelta J.L."/>
            <person name="Moreno S."/>
            <person name="Armstrong J."/>
            <person name="Forsburg S.L."/>
            <person name="Cerutti L."/>
            <person name="Lowe T."/>
            <person name="McCombie W.R."/>
            <person name="Paulsen I."/>
            <person name="Potashkin J."/>
            <person name="Shpakovski G.V."/>
            <person name="Ussery D."/>
            <person name="Barrell B.G."/>
            <person name="Nurse P."/>
        </authorList>
    </citation>
    <scope>NUCLEOTIDE SEQUENCE [LARGE SCALE GENOMIC DNA]</scope>
    <source>
        <strain>972 / ATCC 24843</strain>
    </source>
</reference>
<reference key="2">
    <citation type="journal article" date="2006" name="Nat. Biotechnol.">
        <title>ORFeome cloning and global analysis of protein localization in the fission yeast Schizosaccharomyces pombe.</title>
        <authorList>
            <person name="Matsuyama A."/>
            <person name="Arai R."/>
            <person name="Yashiroda Y."/>
            <person name="Shirai A."/>
            <person name="Kamata A."/>
            <person name="Sekido S."/>
            <person name="Kobayashi Y."/>
            <person name="Hashimoto A."/>
            <person name="Hamamoto M."/>
            <person name="Hiraoka Y."/>
            <person name="Horinouchi S."/>
            <person name="Yoshida M."/>
        </authorList>
    </citation>
    <scope>SUBCELLULAR LOCATION [LARGE SCALE ANALYSIS]</scope>
</reference>
<protein>
    <recommendedName>
        <fullName>Uncharacterized urease accessory protein ureD-like</fullName>
    </recommendedName>
</protein>
<gene>
    <name type="ORF">SPAC3A12.09c</name>
</gene>
<name>URED_SCHPO</name>
<dbReference type="EMBL" id="CU329670">
    <property type="protein sequence ID" value="CAB08754.1"/>
    <property type="molecule type" value="Genomic_DNA"/>
</dbReference>
<dbReference type="PIR" id="T38677">
    <property type="entry name" value="T38677"/>
</dbReference>
<dbReference type="SMR" id="P87125"/>
<dbReference type="BioGRID" id="279505">
    <property type="interactions" value="5"/>
</dbReference>
<dbReference type="FunCoup" id="P87125">
    <property type="interactions" value="30"/>
</dbReference>
<dbReference type="STRING" id="284812.P87125"/>
<dbReference type="PaxDb" id="4896-SPAC3A12.09c.1"/>
<dbReference type="EnsemblFungi" id="SPAC3A12.09c.1">
    <property type="protein sequence ID" value="SPAC3A12.09c.1:pep"/>
    <property type="gene ID" value="SPAC3A12.09c"/>
</dbReference>
<dbReference type="KEGG" id="spo:2543072"/>
<dbReference type="PomBase" id="SPAC3A12.09c"/>
<dbReference type="VEuPathDB" id="FungiDB:SPAC3A12.09c"/>
<dbReference type="eggNOG" id="ENOG502QSQN">
    <property type="taxonomic scope" value="Eukaryota"/>
</dbReference>
<dbReference type="HOGENOM" id="CLU_021703_1_1_1"/>
<dbReference type="InParanoid" id="P87125"/>
<dbReference type="OMA" id="CFRSASY"/>
<dbReference type="PhylomeDB" id="P87125"/>
<dbReference type="PRO" id="PR:P87125"/>
<dbReference type="Proteomes" id="UP000002485">
    <property type="component" value="Chromosome I"/>
</dbReference>
<dbReference type="GO" id="GO:0005829">
    <property type="term" value="C:cytosol"/>
    <property type="evidence" value="ECO:0007005"/>
    <property type="project" value="PomBase"/>
</dbReference>
<dbReference type="GO" id="GO:0005634">
    <property type="term" value="C:nucleus"/>
    <property type="evidence" value="ECO:0007005"/>
    <property type="project" value="PomBase"/>
</dbReference>
<dbReference type="GO" id="GO:0016151">
    <property type="term" value="F:nickel cation binding"/>
    <property type="evidence" value="ECO:0007669"/>
    <property type="project" value="InterPro"/>
</dbReference>
<dbReference type="GO" id="GO:0019627">
    <property type="term" value="P:urea metabolic process"/>
    <property type="evidence" value="ECO:0000316"/>
    <property type="project" value="PomBase"/>
</dbReference>
<dbReference type="HAMAP" id="MF_01384">
    <property type="entry name" value="UreD"/>
    <property type="match status" value="1"/>
</dbReference>
<dbReference type="InterPro" id="IPR002669">
    <property type="entry name" value="UreD"/>
</dbReference>
<dbReference type="PANTHER" id="PTHR33643">
    <property type="entry name" value="UREASE ACCESSORY PROTEIN D"/>
    <property type="match status" value="1"/>
</dbReference>
<dbReference type="PANTHER" id="PTHR33643:SF1">
    <property type="entry name" value="UREASE ACCESSORY PROTEIN D"/>
    <property type="match status" value="1"/>
</dbReference>
<dbReference type="Pfam" id="PF01774">
    <property type="entry name" value="UreD"/>
    <property type="match status" value="1"/>
</dbReference>
<sequence>MEDKEGRFRVECIENVHYVTDMFCKYPLKLIAPKTKLDFSILYIMSYGGGLVSGDRVALDIIVGKNATLCIQSQGNTKLYKQIPGKPATQQKLDVEVGTNALCLLLQDPVQPFGDSNYIQTQNFVLEDETSSLALLDWTLHGRSHINEQWSMRSYVSKNCIQMKIPASNQRKTLLRDVLKIFDEPNLHIGLKAERMHHFECIGNLYLIGPKFLKTKEAVLNQYRNKEKRISKTTDSSQMKKIIWTACEIRSVTIIKFAAYNTETARNFLLKLFSDYASFLDHETLRAFWY</sequence>
<feature type="chain" id="PRO_0000316577" description="Uncharacterized urease accessory protein ureD-like">
    <location>
        <begin position="1"/>
        <end position="290"/>
    </location>
</feature>
<evidence type="ECO:0000250" key="1"/>
<evidence type="ECO:0000269" key="2">
    <source>
    </source>
</evidence>
<evidence type="ECO:0000305" key="3"/>
<organism>
    <name type="scientific">Schizosaccharomyces pombe (strain 972 / ATCC 24843)</name>
    <name type="common">Fission yeast</name>
    <dbReference type="NCBI Taxonomy" id="284812"/>
    <lineage>
        <taxon>Eukaryota</taxon>
        <taxon>Fungi</taxon>
        <taxon>Dikarya</taxon>
        <taxon>Ascomycota</taxon>
        <taxon>Taphrinomycotina</taxon>
        <taxon>Schizosaccharomycetes</taxon>
        <taxon>Schizosaccharomycetales</taxon>
        <taxon>Schizosaccharomycetaceae</taxon>
        <taxon>Schizosaccharomyces</taxon>
    </lineage>
</organism>
<comment type="function">
    <text evidence="1">Probably facilitates nickel incorporation.</text>
</comment>
<comment type="subcellular location">
    <subcellularLocation>
        <location evidence="2">Cytoplasm</location>
    </subcellularLocation>
    <subcellularLocation>
        <location evidence="2">Nucleus</location>
    </subcellularLocation>
</comment>
<comment type="similarity">
    <text evidence="3">Belongs to the UreD family.</text>
</comment>
<keyword id="KW-0143">Chaperone</keyword>
<keyword id="KW-0963">Cytoplasm</keyword>
<keyword id="KW-0996">Nickel insertion</keyword>
<keyword id="KW-0539">Nucleus</keyword>
<keyword id="KW-1185">Reference proteome</keyword>